<feature type="chain" id="PRO_0000228280" description="Holo-[acyl-carrier-protein] synthase">
    <location>
        <begin position="1"/>
        <end position="118"/>
    </location>
</feature>
<feature type="binding site" evidence="1">
    <location>
        <position position="6"/>
    </location>
    <ligand>
        <name>Mg(2+)</name>
        <dbReference type="ChEBI" id="CHEBI:18420"/>
    </ligand>
</feature>
<feature type="binding site" evidence="1">
    <location>
        <position position="55"/>
    </location>
    <ligand>
        <name>Mg(2+)</name>
        <dbReference type="ChEBI" id="CHEBI:18420"/>
    </ligand>
</feature>
<comment type="function">
    <text evidence="1">Transfers the 4'-phosphopantetheine moiety from coenzyme A to a Ser of acyl-carrier-protein.</text>
</comment>
<comment type="catalytic activity">
    <reaction evidence="1">
        <text>apo-[ACP] + CoA = holo-[ACP] + adenosine 3',5'-bisphosphate + H(+)</text>
        <dbReference type="Rhea" id="RHEA:12068"/>
        <dbReference type="Rhea" id="RHEA-COMP:9685"/>
        <dbReference type="Rhea" id="RHEA-COMP:9690"/>
        <dbReference type="ChEBI" id="CHEBI:15378"/>
        <dbReference type="ChEBI" id="CHEBI:29999"/>
        <dbReference type="ChEBI" id="CHEBI:57287"/>
        <dbReference type="ChEBI" id="CHEBI:58343"/>
        <dbReference type="ChEBI" id="CHEBI:64479"/>
        <dbReference type="EC" id="2.7.8.7"/>
    </reaction>
</comment>
<comment type="cofactor">
    <cofactor evidence="1">
        <name>Mg(2+)</name>
        <dbReference type="ChEBI" id="CHEBI:18420"/>
    </cofactor>
</comment>
<comment type="subcellular location">
    <subcellularLocation>
        <location evidence="1">Cytoplasm</location>
    </subcellularLocation>
</comment>
<comment type="similarity">
    <text evidence="1">Belongs to the P-Pant transferase superfamily. AcpS family.</text>
</comment>
<sequence>MEVGIDIVSLERIEVLYSRYGVRFLEKILLPEEVALCLQKPQIVASVAGRFAAKEAIVKALGSGFAQGVHWKSFAILNDAAGRPYVKVIDDECLPPSSVVKLSISHDRHSAVAVAIIE</sequence>
<evidence type="ECO:0000255" key="1">
    <source>
        <dbReference type="HAMAP-Rule" id="MF_00101"/>
    </source>
</evidence>
<keyword id="KW-0963">Cytoplasm</keyword>
<keyword id="KW-0275">Fatty acid biosynthesis</keyword>
<keyword id="KW-0276">Fatty acid metabolism</keyword>
<keyword id="KW-0444">Lipid biosynthesis</keyword>
<keyword id="KW-0443">Lipid metabolism</keyword>
<keyword id="KW-0460">Magnesium</keyword>
<keyword id="KW-0479">Metal-binding</keyword>
<keyword id="KW-0808">Transferase</keyword>
<protein>
    <recommendedName>
        <fullName evidence="1">Holo-[acyl-carrier-protein] synthase</fullName>
        <shortName evidence="1">Holo-ACP synthase</shortName>
        <ecNumber evidence="1">2.7.8.7</ecNumber>
    </recommendedName>
    <alternativeName>
        <fullName evidence="1">4'-phosphopantetheinyl transferase AcpS</fullName>
    </alternativeName>
</protein>
<gene>
    <name evidence="1" type="primary">acpS</name>
    <name type="ordered locus">Cag_0235</name>
</gene>
<accession>Q3AU14</accession>
<proteinExistence type="inferred from homology"/>
<name>ACPS_CHLCH</name>
<reference key="1">
    <citation type="submission" date="2005-08" db="EMBL/GenBank/DDBJ databases">
        <title>Complete sequence of Chlorobium chlorochromatii CaD3.</title>
        <authorList>
            <consortium name="US DOE Joint Genome Institute"/>
            <person name="Copeland A."/>
            <person name="Lucas S."/>
            <person name="Lapidus A."/>
            <person name="Barry K."/>
            <person name="Detter J.C."/>
            <person name="Glavina T."/>
            <person name="Hammon N."/>
            <person name="Israni S."/>
            <person name="Pitluck S."/>
            <person name="Bryant D."/>
            <person name="Schmutz J."/>
            <person name="Larimer F."/>
            <person name="Land M."/>
            <person name="Kyrpides N."/>
            <person name="Ivanova N."/>
            <person name="Richardson P."/>
        </authorList>
    </citation>
    <scope>NUCLEOTIDE SEQUENCE [LARGE SCALE GENOMIC DNA]</scope>
    <source>
        <strain>CaD3</strain>
    </source>
</reference>
<organism>
    <name type="scientific">Chlorobium chlorochromatii (strain CaD3)</name>
    <dbReference type="NCBI Taxonomy" id="340177"/>
    <lineage>
        <taxon>Bacteria</taxon>
        <taxon>Pseudomonadati</taxon>
        <taxon>Chlorobiota</taxon>
        <taxon>Chlorobiia</taxon>
        <taxon>Chlorobiales</taxon>
        <taxon>Chlorobiaceae</taxon>
        <taxon>Chlorobium/Pelodictyon group</taxon>
        <taxon>Chlorobium</taxon>
    </lineage>
</organism>
<dbReference type="EC" id="2.7.8.7" evidence="1"/>
<dbReference type="EMBL" id="CP000108">
    <property type="protein sequence ID" value="ABB27511.1"/>
    <property type="molecule type" value="Genomic_DNA"/>
</dbReference>
<dbReference type="SMR" id="Q3AU14"/>
<dbReference type="STRING" id="340177.Cag_0235"/>
<dbReference type="KEGG" id="cch:Cag_0235"/>
<dbReference type="eggNOG" id="COG0736">
    <property type="taxonomic scope" value="Bacteria"/>
</dbReference>
<dbReference type="HOGENOM" id="CLU_089696_3_1_10"/>
<dbReference type="OrthoDB" id="517356at2"/>
<dbReference type="GO" id="GO:0005737">
    <property type="term" value="C:cytoplasm"/>
    <property type="evidence" value="ECO:0007669"/>
    <property type="project" value="UniProtKB-SubCell"/>
</dbReference>
<dbReference type="GO" id="GO:0008897">
    <property type="term" value="F:holo-[acyl-carrier-protein] synthase activity"/>
    <property type="evidence" value="ECO:0007669"/>
    <property type="project" value="UniProtKB-UniRule"/>
</dbReference>
<dbReference type="GO" id="GO:0000287">
    <property type="term" value="F:magnesium ion binding"/>
    <property type="evidence" value="ECO:0007669"/>
    <property type="project" value="UniProtKB-UniRule"/>
</dbReference>
<dbReference type="GO" id="GO:0006633">
    <property type="term" value="P:fatty acid biosynthetic process"/>
    <property type="evidence" value="ECO:0007669"/>
    <property type="project" value="UniProtKB-UniRule"/>
</dbReference>
<dbReference type="Gene3D" id="3.90.470.20">
    <property type="entry name" value="4'-phosphopantetheinyl transferase domain"/>
    <property type="match status" value="1"/>
</dbReference>
<dbReference type="HAMAP" id="MF_00101">
    <property type="entry name" value="AcpS"/>
    <property type="match status" value="1"/>
</dbReference>
<dbReference type="InterPro" id="IPR008278">
    <property type="entry name" value="4-PPantetheinyl_Trfase_dom"/>
</dbReference>
<dbReference type="InterPro" id="IPR037143">
    <property type="entry name" value="4-PPantetheinyl_Trfase_dom_sf"/>
</dbReference>
<dbReference type="InterPro" id="IPR002582">
    <property type="entry name" value="ACPS"/>
</dbReference>
<dbReference type="InterPro" id="IPR004568">
    <property type="entry name" value="Ppantetheine-prot_Trfase_dom"/>
</dbReference>
<dbReference type="NCBIfam" id="TIGR00516">
    <property type="entry name" value="acpS"/>
    <property type="match status" value="1"/>
</dbReference>
<dbReference type="NCBIfam" id="TIGR00556">
    <property type="entry name" value="pantethn_trn"/>
    <property type="match status" value="1"/>
</dbReference>
<dbReference type="NCBIfam" id="NF011257">
    <property type="entry name" value="PRK14663.1"/>
    <property type="match status" value="1"/>
</dbReference>
<dbReference type="Pfam" id="PF01648">
    <property type="entry name" value="ACPS"/>
    <property type="match status" value="1"/>
</dbReference>
<dbReference type="SUPFAM" id="SSF56214">
    <property type="entry name" value="4'-phosphopantetheinyl transferase"/>
    <property type="match status" value="1"/>
</dbReference>